<evidence type="ECO:0000256" key="1">
    <source>
        <dbReference type="SAM" id="MobiDB-lite"/>
    </source>
</evidence>
<evidence type="ECO:0000269" key="2">
    <source>
    </source>
</evidence>
<evidence type="ECO:0000269" key="3">
    <source>
    </source>
</evidence>
<evidence type="ECO:0000269" key="4">
    <source>
    </source>
</evidence>
<evidence type="ECO:0000269" key="5">
    <source>
    </source>
</evidence>
<evidence type="ECO:0000269" key="6">
    <source>
    </source>
</evidence>
<evidence type="ECO:0000269" key="7">
    <source>
    </source>
</evidence>
<evidence type="ECO:0000269" key="8">
    <source>
    </source>
</evidence>
<evidence type="ECO:0000269" key="9">
    <source>
    </source>
</evidence>
<evidence type="ECO:0000269" key="10">
    <source>
    </source>
</evidence>
<evidence type="ECO:0000269" key="11">
    <source>
    </source>
</evidence>
<evidence type="ECO:0000269" key="12">
    <source>
    </source>
</evidence>
<evidence type="ECO:0000269" key="13">
    <source>
    </source>
</evidence>
<evidence type="ECO:0000269" key="14">
    <source ref="2"/>
</evidence>
<evidence type="ECO:0000305" key="15"/>
<evidence type="ECO:0007744" key="16">
    <source>
    </source>
</evidence>
<evidence type="ECO:0007744" key="17">
    <source>
    </source>
</evidence>
<evidence type="ECO:0007744" key="18">
    <source>
    </source>
</evidence>
<evidence type="ECO:0007744" key="19">
    <source>
    </source>
</evidence>
<evidence type="ECO:0007829" key="20">
    <source>
        <dbReference type="PDB" id="1WYW"/>
    </source>
</evidence>
<evidence type="ECO:0007829" key="21">
    <source>
        <dbReference type="PDB" id="2D07"/>
    </source>
</evidence>
<evidence type="ECO:0007829" key="22">
    <source>
        <dbReference type="PDB" id="2RBA"/>
    </source>
</evidence>
<evidence type="ECO:0007829" key="23">
    <source>
        <dbReference type="PDB" id="4Z47"/>
    </source>
</evidence>
<evidence type="ECO:0007829" key="24">
    <source>
        <dbReference type="PDB" id="5CYS"/>
    </source>
</evidence>
<evidence type="ECO:0007829" key="25">
    <source>
        <dbReference type="PDB" id="5HF7"/>
    </source>
</evidence>
<keyword id="KW-0002">3D-structure</keyword>
<keyword id="KW-0010">Activator</keyword>
<keyword id="KW-0156">Chromatin regulator</keyword>
<keyword id="KW-0903">Direct protein sequencing</keyword>
<keyword id="KW-0227">DNA damage</keyword>
<keyword id="KW-0234">DNA repair</keyword>
<keyword id="KW-0378">Hydrolase</keyword>
<keyword id="KW-1017">Isopeptide bond</keyword>
<keyword id="KW-0539">Nucleus</keyword>
<keyword id="KW-1267">Proteomics identification</keyword>
<keyword id="KW-1185">Reference proteome</keyword>
<keyword id="KW-0804">Transcription</keyword>
<keyword id="KW-0805">Transcription regulation</keyword>
<keyword id="KW-0832">Ubl conjugation</keyword>
<comment type="function">
    <text evidence="7 8 9 10 11 12 13">DNA glycosylase that plays a key role in active DNA demethylation: specifically recognizes and binds 5-formylcytosine (5fC) and 5-carboxylcytosine (5caC) in the context of CpG sites and mediates their excision through base-excision repair (BER) to install an unmethylated cytosine. Cannot remove 5-hydroxymethylcytosine (5hmC). According to an alternative model, involved in DNA demethylation by mediating DNA glycolase activity toward 5-hydroxymethyluracil (5hmU) produced by deamination of 5hmC. Also involved in DNA repair by acting as a thymine-DNA glycosylase that mediates correction of G/T mispairs to G/C pairs: in the DNA of higher eukaryotes, hydrolytic deamination of 5-methylcytosine to thymine leads to the formation of G/T mismatches. Its role in the repair of canonical base damage is however minor compared to its role in DNA demethylation. It is capable of hydrolyzing the carbon-nitrogen bond between the sugar-phosphate backbone of the DNA and a mispaired thymine. In addition to the G/T, it can remove thymine also from C/T and T/T mispairs in the order G/T &gt;&gt; C/T &gt; T/T. It has no detectable activity on apyrimidinic sites and does not catalyze the removal of thymine from A/T pairs or from single-stranded DNA. It can also remove uracil and 5-bromouracil from mispairs with guanine.</text>
</comment>
<comment type="catalytic activity">
    <reaction>
        <text>Hydrolyzes mismatched double-stranded DNA and polynucleotides, releasing free thymine.</text>
        <dbReference type="EC" id="3.2.2.29"/>
    </reaction>
</comment>
<comment type="subunit">
    <text evidence="5 6 8 9 10">Homodimer. Interacts with AICDA and GADD45A.</text>
</comment>
<comment type="interaction">
    <interactant intactId="EBI-348333">
        <id>Q13569</id>
    </interactant>
    <interactant intactId="EBI-3834328">
        <id>Q9GZX7</id>
        <label>AICDA</label>
    </interactant>
    <organismsDiffer>false</organismsDiffer>
    <experiments>5</experiments>
</comment>
<comment type="interaction">
    <interactant intactId="EBI-348333">
        <id>Q13569</id>
    </interactant>
    <interactant intactId="EBI-21535880">
        <id>Q92870-2</id>
        <label>APBB2</label>
    </interactant>
    <organismsDiffer>false</organismsDiffer>
    <experiments>3</experiments>
</comment>
<comment type="interaction">
    <interactant intactId="EBI-348333">
        <id>Q13569</id>
    </interactant>
    <interactant intactId="EBI-448167">
        <id>P24522</id>
        <label>GADD45A</label>
    </interactant>
    <organismsDiffer>false</organismsDiffer>
    <experiments>3</experiments>
</comment>
<comment type="interaction">
    <interactant intactId="EBI-348333">
        <id>Q13569</id>
    </interactant>
    <interactant intactId="EBI-747754">
        <id>P28799</id>
        <label>GRN</label>
    </interactant>
    <organismsDiffer>false</organismsDiffer>
    <experiments>3</experiments>
</comment>
<comment type="interaction">
    <interactant intactId="EBI-348333">
        <id>Q13569</id>
    </interactant>
    <interactant intactId="EBI-352682">
        <id>P04792</id>
        <label>HSPB1</label>
    </interactant>
    <organismsDiffer>false</organismsDiffer>
    <experiments>3</experiments>
</comment>
<comment type="interaction">
    <interactant intactId="EBI-348333">
        <id>Q13569</id>
    </interactant>
    <interactant intactId="EBI-10975473">
        <id>O60333-2</id>
        <label>KIF1B</label>
    </interactant>
    <organismsDiffer>false</organismsDiffer>
    <experiments>3</experiments>
</comment>
<comment type="interaction">
    <interactant intactId="EBI-348333">
        <id>Q13569</id>
    </interactant>
    <interactant intactId="EBI-455189">
        <id>Q15788</id>
        <label>NCOA1</label>
    </interactant>
    <organismsDiffer>false</organismsDiffer>
    <experiments>8</experiments>
</comment>
<comment type="interaction">
    <interactant intactId="EBI-348333">
        <id>Q13569</id>
    </interactant>
    <interactant intactId="EBI-5327712">
        <id>Q15788-2</id>
        <label>NCOA1</label>
    </interactant>
    <organismsDiffer>false</organismsDiffer>
    <experiments>2</experiments>
</comment>
<comment type="interaction">
    <interactant intactId="EBI-348333">
        <id>Q13569</id>
    </interactant>
    <interactant intactId="EBI-475646">
        <id>P07196</id>
        <label>NEFL</label>
    </interactant>
    <organismsDiffer>false</organismsDiffer>
    <experiments>3</experiments>
</comment>
<comment type="interaction">
    <interactant intactId="EBI-348333">
        <id>Q13569</id>
    </interactant>
    <interactant intactId="EBI-50433196">
        <id>A0A6Q8PF08</id>
        <label>PMP22</label>
    </interactant>
    <organismsDiffer>false</organismsDiffer>
    <experiments>3</experiments>
</comment>
<comment type="interaction">
    <interactant intactId="EBI-348333">
        <id>Q13569</id>
    </interactant>
    <interactant intactId="EBI-749195">
        <id>P60891</id>
        <label>PRPS1</label>
    </interactant>
    <organismsDiffer>false</organismsDiffer>
    <experiments>3</experiments>
</comment>
<comment type="interaction">
    <interactant intactId="EBI-348333">
        <id>Q13569</id>
    </interactant>
    <interactant intactId="EBI-396669">
        <id>Q9Y3C5</id>
        <label>RNF11</label>
    </interactant>
    <organismsDiffer>false</organismsDiffer>
    <experiments>3</experiments>
</comment>
<comment type="interaction">
    <interactant intactId="EBI-348333">
        <id>Q13569</id>
    </interactant>
    <interactant intactId="EBI-985879">
        <id>P37840</id>
        <label>SNCA</label>
    </interactant>
    <organismsDiffer>false</organismsDiffer>
    <experiments>3</experiments>
</comment>
<comment type="interaction">
    <interactant intactId="EBI-348333">
        <id>Q13569</id>
    </interactant>
    <interactant intactId="EBI-80140">
        <id>P63165</id>
        <label>SUMO1</label>
    </interactant>
    <organismsDiffer>false</organismsDiffer>
    <experiments>3</experiments>
</comment>
<comment type="interaction">
    <interactant intactId="EBI-348333">
        <id>Q13569</id>
    </interactant>
    <interactant intactId="EBI-473220">
        <id>P61956</id>
        <label>SUMO2</label>
    </interactant>
    <organismsDiffer>false</organismsDiffer>
    <experiments>2</experiments>
</comment>
<comment type="interaction">
    <interactant intactId="EBI-348333">
        <id>Q13569</id>
    </interactant>
    <interactant intactId="EBI-711909">
        <id>P02766</id>
        <label>TTR</label>
    </interactant>
    <organismsDiffer>false</organismsDiffer>
    <experiments>3</experiments>
</comment>
<comment type="interaction">
    <interactant intactId="EBI-348333">
        <id>Q13569</id>
    </interactant>
    <interactant intactId="EBI-720609">
        <id>O76024</id>
        <label>WFS1</label>
    </interactant>
    <organismsDiffer>false</organismsDiffer>
    <experiments>3</experiments>
</comment>
<comment type="interaction">
    <interactant intactId="EBI-348333">
        <id>Q13569</id>
    </interactant>
    <interactant intactId="EBI-7258907">
        <id>O88846</id>
        <label>Rnf4</label>
    </interactant>
    <organismsDiffer>true</organismsDiffer>
    <experiments>2</experiments>
</comment>
<comment type="subcellular location">
    <subcellularLocation>
        <location evidence="13">Nucleus</location>
    </subcellularLocation>
</comment>
<comment type="PTM">
    <text evidence="2">Sumoylation on Lys-330 by either SUMO1 or SUMO2 induces dissociation of the product DNA.</text>
</comment>
<comment type="similarity">
    <text evidence="15">Belongs to the uracil-DNA glycosylase (UDG) superfamily. TDG/mug family.</text>
</comment>
<accession>Q13569</accession>
<accession>Q8IUZ6</accession>
<accession>Q8IZM3</accession>
<proteinExistence type="evidence at protein level"/>
<sequence length="410" mass="46053">MEAENAGSYSLQQAQAFYTFPFQQLMAEAPNMAVVNEQQMPEEVPAPAPAQEPVQEAPKGRKRKPRTTEPKQPVEPKKPVESKKSGKSAKSKEKQEKITDTFKVKRKVDRFNGVSEAELLTKTLPDILTFNLDIVIIGINPGLMAAYKGHHYPGPGNHFWKCLFMSGLSEVQLNHMDDHTLPGKYGIGFTNMVERTTPGSKDLSSKEFREGGRILVQKLQKYQPRIAVFNGKCIYEIFSKEVFGVKVKNLEFGLQPHKIPDTETLCYVMPSSSARCAQFPRAQDKVHYYIKLKDLRDQLKGIERNMDVQEVQYTFDLQLAQEDAKKMAVKEEKYDPGYEAAYGGAYGENPCSSEPCGFSSNGLIESVELRGESAFSGIPNGQWMTQSFTDQIPSFSNHCGTQEQEEESHA</sequence>
<dbReference type="EC" id="3.2.2.29"/>
<dbReference type="EMBL" id="U51166">
    <property type="protein sequence ID" value="AAC50540.1"/>
    <property type="molecule type" value="mRNA"/>
</dbReference>
<dbReference type="EMBL" id="AF545435">
    <property type="protein sequence ID" value="AAN16399.1"/>
    <property type="molecule type" value="Genomic_DNA"/>
</dbReference>
<dbReference type="EMBL" id="AC078819">
    <property type="status" value="NOT_ANNOTATED_CDS"/>
    <property type="molecule type" value="Genomic_DNA"/>
</dbReference>
<dbReference type="EMBL" id="BC037557">
    <property type="protein sequence ID" value="AAH37557.1"/>
    <property type="molecule type" value="mRNA"/>
</dbReference>
<dbReference type="CCDS" id="CCDS9095.1"/>
<dbReference type="RefSeq" id="NP_003202.3">
    <property type="nucleotide sequence ID" value="NM_003211.4"/>
</dbReference>
<dbReference type="PDB" id="1WYW">
    <property type="method" value="X-ray"/>
    <property type="resolution" value="2.10 A"/>
    <property type="chains" value="A=112-339"/>
</dbReference>
<dbReference type="PDB" id="2D07">
    <property type="method" value="X-ray"/>
    <property type="resolution" value="2.10 A"/>
    <property type="chains" value="A=112-339"/>
</dbReference>
<dbReference type="PDB" id="2RBA">
    <property type="method" value="X-ray"/>
    <property type="resolution" value="2.79 A"/>
    <property type="chains" value="A/B=111-308"/>
</dbReference>
<dbReference type="PDB" id="3UFJ">
    <property type="method" value="X-ray"/>
    <property type="resolution" value="2.97 A"/>
    <property type="chains" value="A/B=111-308"/>
</dbReference>
<dbReference type="PDB" id="3UO7">
    <property type="method" value="X-ray"/>
    <property type="resolution" value="3.00 A"/>
    <property type="chains" value="A/B=111-308"/>
</dbReference>
<dbReference type="PDB" id="3UOB">
    <property type="method" value="X-ray"/>
    <property type="resolution" value="3.01 A"/>
    <property type="chains" value="A/B=111-308"/>
</dbReference>
<dbReference type="PDB" id="4FNC">
    <property type="method" value="X-ray"/>
    <property type="resolution" value="2.49 A"/>
    <property type="chains" value="A=111-308"/>
</dbReference>
<dbReference type="PDB" id="4JGC">
    <property type="method" value="X-ray"/>
    <property type="resolution" value="2.58 A"/>
    <property type="chains" value="A=111-308"/>
</dbReference>
<dbReference type="PDB" id="4XEG">
    <property type="method" value="X-ray"/>
    <property type="resolution" value="1.72 A"/>
    <property type="chains" value="A=111-308"/>
</dbReference>
<dbReference type="PDB" id="4Z3A">
    <property type="method" value="X-ray"/>
    <property type="resolution" value="1.72 A"/>
    <property type="chains" value="A=111-308"/>
</dbReference>
<dbReference type="PDB" id="4Z47">
    <property type="method" value="X-ray"/>
    <property type="resolution" value="1.45 A"/>
    <property type="chains" value="A=111-308"/>
</dbReference>
<dbReference type="PDB" id="4Z7B">
    <property type="method" value="X-ray"/>
    <property type="resolution" value="2.02 A"/>
    <property type="chains" value="A=111-308"/>
</dbReference>
<dbReference type="PDB" id="4Z7Z">
    <property type="method" value="X-ray"/>
    <property type="resolution" value="1.83 A"/>
    <property type="chains" value="A=111-308"/>
</dbReference>
<dbReference type="PDB" id="5CYS">
    <property type="method" value="X-ray"/>
    <property type="resolution" value="2.45 A"/>
    <property type="chains" value="A=111-308"/>
</dbReference>
<dbReference type="PDB" id="5FF8">
    <property type="method" value="X-ray"/>
    <property type="resolution" value="1.70 A"/>
    <property type="chains" value="A=82-308"/>
</dbReference>
<dbReference type="PDB" id="5HF7">
    <property type="method" value="X-ray"/>
    <property type="resolution" value="1.54 A"/>
    <property type="chains" value="A=82-308"/>
</dbReference>
<dbReference type="PDB" id="5JXY">
    <property type="method" value="X-ray"/>
    <property type="resolution" value="1.71 A"/>
    <property type="chains" value="A=111-308"/>
</dbReference>
<dbReference type="PDB" id="5T2W">
    <property type="method" value="X-ray"/>
    <property type="resolution" value="2.20 A"/>
    <property type="chains" value="A=82-308"/>
</dbReference>
<dbReference type="PDB" id="6U15">
    <property type="method" value="X-ray"/>
    <property type="resolution" value="2.40 A"/>
    <property type="chains" value="A=82-308"/>
</dbReference>
<dbReference type="PDB" id="6U16">
    <property type="method" value="X-ray"/>
    <property type="resolution" value="1.60 A"/>
    <property type="chains" value="A=82-308"/>
</dbReference>
<dbReference type="PDB" id="6U17">
    <property type="method" value="X-ray"/>
    <property type="resolution" value="1.55 A"/>
    <property type="chains" value="A=82-308"/>
</dbReference>
<dbReference type="PDBsum" id="1WYW"/>
<dbReference type="PDBsum" id="2D07"/>
<dbReference type="PDBsum" id="2RBA"/>
<dbReference type="PDBsum" id="3UFJ"/>
<dbReference type="PDBsum" id="3UO7"/>
<dbReference type="PDBsum" id="3UOB"/>
<dbReference type="PDBsum" id="4FNC"/>
<dbReference type="PDBsum" id="4JGC"/>
<dbReference type="PDBsum" id="4XEG"/>
<dbReference type="PDBsum" id="4Z3A"/>
<dbReference type="PDBsum" id="4Z47"/>
<dbReference type="PDBsum" id="4Z7B"/>
<dbReference type="PDBsum" id="4Z7Z"/>
<dbReference type="PDBsum" id="5CYS"/>
<dbReference type="PDBsum" id="5FF8"/>
<dbReference type="PDBsum" id="5HF7"/>
<dbReference type="PDBsum" id="5JXY"/>
<dbReference type="PDBsum" id="5T2W"/>
<dbReference type="PDBsum" id="6U15"/>
<dbReference type="PDBsum" id="6U16"/>
<dbReference type="PDBsum" id="6U17"/>
<dbReference type="SMR" id="Q13569"/>
<dbReference type="BioGRID" id="112855">
    <property type="interactions" value="67"/>
</dbReference>
<dbReference type="DIP" id="DIP-32709N"/>
<dbReference type="ELM" id="Q13569"/>
<dbReference type="FunCoup" id="Q13569">
    <property type="interactions" value="3505"/>
</dbReference>
<dbReference type="IntAct" id="Q13569">
    <property type="interactions" value="29"/>
</dbReference>
<dbReference type="MINT" id="Q13569"/>
<dbReference type="STRING" id="9606.ENSP00000376611"/>
<dbReference type="ChEMBL" id="CHEMBL5465279"/>
<dbReference type="GlyGen" id="Q13569">
    <property type="glycosylation" value="2 sites, 1 O-linked glycan (1 site)"/>
</dbReference>
<dbReference type="iPTMnet" id="Q13569"/>
<dbReference type="PhosphoSitePlus" id="Q13569"/>
<dbReference type="BioMuta" id="TDG"/>
<dbReference type="DMDM" id="46397791"/>
<dbReference type="jPOST" id="Q13569"/>
<dbReference type="MassIVE" id="Q13569"/>
<dbReference type="PaxDb" id="9606-ENSP00000376611"/>
<dbReference type="PeptideAtlas" id="Q13569"/>
<dbReference type="ProteomicsDB" id="59573"/>
<dbReference type="Pumba" id="Q13569"/>
<dbReference type="Antibodypedia" id="30563">
    <property type="antibodies" value="413 antibodies from 32 providers"/>
</dbReference>
<dbReference type="DNASU" id="6996"/>
<dbReference type="Ensembl" id="ENST00000392872.8">
    <property type="protein sequence ID" value="ENSP00000376611.3"/>
    <property type="gene ID" value="ENSG00000139372.15"/>
</dbReference>
<dbReference type="GeneID" id="6996"/>
<dbReference type="KEGG" id="hsa:6996"/>
<dbReference type="MANE-Select" id="ENST00000392872.8">
    <property type="protein sequence ID" value="ENSP00000376611.3"/>
    <property type="RefSeq nucleotide sequence ID" value="NM_003211.6"/>
    <property type="RefSeq protein sequence ID" value="NP_003202.3"/>
</dbReference>
<dbReference type="UCSC" id="uc001tkg.4">
    <property type="organism name" value="human"/>
</dbReference>
<dbReference type="AGR" id="HGNC:11700"/>
<dbReference type="CTD" id="6996"/>
<dbReference type="DisGeNET" id="6996"/>
<dbReference type="GeneCards" id="TDG"/>
<dbReference type="HGNC" id="HGNC:11700">
    <property type="gene designation" value="TDG"/>
</dbReference>
<dbReference type="HPA" id="ENSG00000139372">
    <property type="expression patterns" value="Low tissue specificity"/>
</dbReference>
<dbReference type="MIM" id="601423">
    <property type="type" value="gene"/>
</dbReference>
<dbReference type="neXtProt" id="NX_Q13569"/>
<dbReference type="OpenTargets" id="ENSG00000139372"/>
<dbReference type="PharmGKB" id="PA36419"/>
<dbReference type="VEuPathDB" id="HostDB:ENSG00000139372"/>
<dbReference type="eggNOG" id="KOG4120">
    <property type="taxonomic scope" value="Eukaryota"/>
</dbReference>
<dbReference type="GeneTree" id="ENSGT00390000000987"/>
<dbReference type="HOGENOM" id="CLU_045775_1_0_1"/>
<dbReference type="InParanoid" id="Q13569"/>
<dbReference type="OMA" id="FYPFPFH"/>
<dbReference type="OrthoDB" id="565731at2759"/>
<dbReference type="PAN-GO" id="Q13569">
    <property type="GO annotations" value="4 GO annotations based on evolutionary models"/>
</dbReference>
<dbReference type="PhylomeDB" id="Q13569"/>
<dbReference type="TreeFam" id="TF328764"/>
<dbReference type="BRENDA" id="3.2.2.29">
    <property type="organism ID" value="2681"/>
</dbReference>
<dbReference type="PathwayCommons" id="Q13569"/>
<dbReference type="Reactome" id="R-HSA-110328">
    <property type="pathway name" value="Recognition and association of DNA glycosylase with site containing an affected pyrimidine"/>
</dbReference>
<dbReference type="Reactome" id="R-HSA-110329">
    <property type="pathway name" value="Cleavage of the damaged pyrimidine"/>
</dbReference>
<dbReference type="Reactome" id="R-HSA-110357">
    <property type="pathway name" value="Displacement of DNA glycosylase by APEX1"/>
</dbReference>
<dbReference type="Reactome" id="R-HSA-3108214">
    <property type="pathway name" value="SUMOylation of DNA damage response and repair proteins"/>
</dbReference>
<dbReference type="Reactome" id="R-HSA-5221030">
    <property type="pathway name" value="TET1,2,3 and TDG demethylate DNA"/>
</dbReference>
<dbReference type="SignaLink" id="Q13569"/>
<dbReference type="SIGNOR" id="Q13569"/>
<dbReference type="BioGRID-ORCS" id="6996">
    <property type="hits" value="61 hits in 1118 CRISPR screens"/>
</dbReference>
<dbReference type="ChiTaRS" id="TDG">
    <property type="organism name" value="human"/>
</dbReference>
<dbReference type="EvolutionaryTrace" id="Q13569"/>
<dbReference type="GeneWiki" id="Thymine-DNA_glycosylase"/>
<dbReference type="GenomeRNAi" id="6996"/>
<dbReference type="Pharos" id="Q13569">
    <property type="development level" value="Tbio"/>
</dbReference>
<dbReference type="PRO" id="PR:Q13569"/>
<dbReference type="Proteomes" id="UP000005640">
    <property type="component" value="Chromosome 12"/>
</dbReference>
<dbReference type="RNAct" id="Q13569">
    <property type="molecule type" value="protein"/>
</dbReference>
<dbReference type="Bgee" id="ENSG00000139372">
    <property type="expression patterns" value="Expressed in buccal mucosa cell and 209 other cell types or tissues"/>
</dbReference>
<dbReference type="ExpressionAtlas" id="Q13569">
    <property type="expression patterns" value="baseline and differential"/>
</dbReference>
<dbReference type="GO" id="GO:0005654">
    <property type="term" value="C:nucleoplasm"/>
    <property type="evidence" value="ECO:0000314"/>
    <property type="project" value="HPA"/>
</dbReference>
<dbReference type="GO" id="GO:0005634">
    <property type="term" value="C:nucleus"/>
    <property type="evidence" value="ECO:0000314"/>
    <property type="project" value="UniProtKB"/>
</dbReference>
<dbReference type="GO" id="GO:0005886">
    <property type="term" value="C:plasma membrane"/>
    <property type="evidence" value="ECO:0000314"/>
    <property type="project" value="HPA"/>
</dbReference>
<dbReference type="GO" id="GO:0016605">
    <property type="term" value="C:PML body"/>
    <property type="evidence" value="ECO:0007669"/>
    <property type="project" value="Ensembl"/>
</dbReference>
<dbReference type="GO" id="GO:0005524">
    <property type="term" value="F:ATP binding"/>
    <property type="evidence" value="ECO:0000314"/>
    <property type="project" value="CAFA"/>
</dbReference>
<dbReference type="GO" id="GO:0031404">
    <property type="term" value="F:chloride ion binding"/>
    <property type="evidence" value="ECO:0000314"/>
    <property type="project" value="CAFA"/>
</dbReference>
<dbReference type="GO" id="GO:0003684">
    <property type="term" value="F:damaged DNA binding"/>
    <property type="evidence" value="ECO:0000304"/>
    <property type="project" value="ProtInc"/>
</dbReference>
<dbReference type="GO" id="GO:0003677">
    <property type="term" value="F:DNA binding"/>
    <property type="evidence" value="ECO:0000250"/>
    <property type="project" value="UniProtKB"/>
</dbReference>
<dbReference type="GO" id="GO:0019104">
    <property type="term" value="F:DNA N-glycosylase activity"/>
    <property type="evidence" value="ECO:0000314"/>
    <property type="project" value="UniProtKB"/>
</dbReference>
<dbReference type="GO" id="GO:0140297">
    <property type="term" value="F:DNA-binding transcription factor binding"/>
    <property type="evidence" value="ECO:0007669"/>
    <property type="project" value="Ensembl"/>
</dbReference>
<dbReference type="GO" id="GO:0003690">
    <property type="term" value="F:double-stranded DNA binding"/>
    <property type="evidence" value="ECO:0000314"/>
    <property type="project" value="UniProtKB"/>
</dbReference>
<dbReference type="GO" id="GO:0141016">
    <property type="term" value="F:G/T mismatch-specific thymine-DNA glycosylase activity"/>
    <property type="evidence" value="ECO:0007669"/>
    <property type="project" value="UniProtKB-EC"/>
</dbReference>
<dbReference type="GO" id="GO:0043739">
    <property type="term" value="F:G/U mismatch-specific uracil-DNA glycosylase activity"/>
    <property type="evidence" value="ECO:0000315"/>
    <property type="project" value="CAFA"/>
</dbReference>
<dbReference type="GO" id="GO:0000287">
    <property type="term" value="F:magnesium ion binding"/>
    <property type="evidence" value="ECO:0000314"/>
    <property type="project" value="CAFA"/>
</dbReference>
<dbReference type="GO" id="GO:0030983">
    <property type="term" value="F:mismatched DNA binding"/>
    <property type="evidence" value="ECO:0000314"/>
    <property type="project" value="UniProtKB"/>
</dbReference>
<dbReference type="GO" id="GO:0003676">
    <property type="term" value="F:nucleic acid binding"/>
    <property type="evidence" value="ECO:0000269"/>
    <property type="project" value="DisProt"/>
</dbReference>
<dbReference type="GO" id="GO:0019904">
    <property type="term" value="F:protein domain specific binding"/>
    <property type="evidence" value="ECO:0007669"/>
    <property type="project" value="Ensembl"/>
</dbReference>
<dbReference type="GO" id="GO:0005080">
    <property type="term" value="F:protein kinase C binding"/>
    <property type="evidence" value="ECO:0007669"/>
    <property type="project" value="Ensembl"/>
</dbReference>
<dbReference type="GO" id="GO:0008263">
    <property type="term" value="F:pyrimidine-specific mismatch base pair DNA N-glycosylase activity"/>
    <property type="evidence" value="ECO:0000314"/>
    <property type="project" value="UniProtKB"/>
</dbReference>
<dbReference type="GO" id="GO:0031402">
    <property type="term" value="F:sodium ion binding"/>
    <property type="evidence" value="ECO:0000314"/>
    <property type="project" value="CAFA"/>
</dbReference>
<dbReference type="GO" id="GO:0032183">
    <property type="term" value="F:SUMO binding"/>
    <property type="evidence" value="ECO:0000353"/>
    <property type="project" value="CAFA"/>
</dbReference>
<dbReference type="GO" id="GO:0003712">
    <property type="term" value="F:transcription coregulator activity"/>
    <property type="evidence" value="ECO:0007669"/>
    <property type="project" value="Ensembl"/>
</dbReference>
<dbReference type="GO" id="GO:0004844">
    <property type="term" value="F:uracil DNA N-glycosylase activity"/>
    <property type="evidence" value="ECO:0000314"/>
    <property type="project" value="CAFA"/>
</dbReference>
<dbReference type="GO" id="GO:0006284">
    <property type="term" value="P:base-excision repair"/>
    <property type="evidence" value="ECO:0000314"/>
    <property type="project" value="UniProtKB"/>
</dbReference>
<dbReference type="GO" id="GO:0006285">
    <property type="term" value="P:base-excision repair, AP site formation"/>
    <property type="evidence" value="ECO:0000318"/>
    <property type="project" value="GO_Central"/>
</dbReference>
<dbReference type="GO" id="GO:0141167">
    <property type="term" value="P:chromosomal 5-methylcytosine DNA demethylation, oxidation pathway"/>
    <property type="evidence" value="ECO:0000304"/>
    <property type="project" value="Reactome"/>
</dbReference>
<dbReference type="GO" id="GO:0045008">
    <property type="term" value="P:depyrimidination"/>
    <property type="evidence" value="ECO:0000304"/>
    <property type="project" value="Reactome"/>
</dbReference>
<dbReference type="GO" id="GO:0040029">
    <property type="term" value="P:epigenetic regulation of gene expression"/>
    <property type="evidence" value="ECO:0000250"/>
    <property type="project" value="UniProtKB"/>
</dbReference>
<dbReference type="GO" id="GO:0000122">
    <property type="term" value="P:negative regulation of transcription by RNA polymerase II"/>
    <property type="evidence" value="ECO:0007669"/>
    <property type="project" value="Ensembl"/>
</dbReference>
<dbReference type="GO" id="GO:0045995">
    <property type="term" value="P:regulation of embryonic development"/>
    <property type="evidence" value="ECO:0007669"/>
    <property type="project" value="Ensembl"/>
</dbReference>
<dbReference type="CDD" id="cd10028">
    <property type="entry name" value="UDG-F2_TDG_MUG"/>
    <property type="match status" value="1"/>
</dbReference>
<dbReference type="DisProt" id="DP00719"/>
<dbReference type="FunFam" id="3.40.470.10:FF:000002">
    <property type="entry name" value="G/T mismatch-specific thymine DNA glycosylase"/>
    <property type="match status" value="1"/>
</dbReference>
<dbReference type="Gene3D" id="3.40.470.10">
    <property type="entry name" value="Uracil-DNA glycosylase-like domain"/>
    <property type="match status" value="1"/>
</dbReference>
<dbReference type="InterPro" id="IPR015637">
    <property type="entry name" value="MUG/TDG"/>
</dbReference>
<dbReference type="InterPro" id="IPR003310">
    <property type="entry name" value="TDG-like_euk"/>
</dbReference>
<dbReference type="InterPro" id="IPR005122">
    <property type="entry name" value="Uracil-DNA_glycosylase-like"/>
</dbReference>
<dbReference type="InterPro" id="IPR036895">
    <property type="entry name" value="Uracil-DNA_glycosylase-like_sf"/>
</dbReference>
<dbReference type="NCBIfam" id="TIGR00584">
    <property type="entry name" value="mug"/>
    <property type="match status" value="1"/>
</dbReference>
<dbReference type="PANTHER" id="PTHR12159">
    <property type="entry name" value="G/T AND G/U MISMATCH-SPECIFIC DNA GLYCOSYLASE"/>
    <property type="match status" value="1"/>
</dbReference>
<dbReference type="PANTHER" id="PTHR12159:SF9">
    <property type="entry name" value="G_T MISMATCH-SPECIFIC THYMINE DNA GLYCOSYLASE"/>
    <property type="match status" value="1"/>
</dbReference>
<dbReference type="Pfam" id="PF03167">
    <property type="entry name" value="UDG"/>
    <property type="match status" value="1"/>
</dbReference>
<dbReference type="SUPFAM" id="SSF52141">
    <property type="entry name" value="Uracil-DNA glycosylase-like"/>
    <property type="match status" value="1"/>
</dbReference>
<gene>
    <name type="primary">TDG</name>
</gene>
<organism>
    <name type="scientific">Homo sapiens</name>
    <name type="common">Human</name>
    <dbReference type="NCBI Taxonomy" id="9606"/>
    <lineage>
        <taxon>Eukaryota</taxon>
        <taxon>Metazoa</taxon>
        <taxon>Chordata</taxon>
        <taxon>Craniata</taxon>
        <taxon>Vertebrata</taxon>
        <taxon>Euteleostomi</taxon>
        <taxon>Mammalia</taxon>
        <taxon>Eutheria</taxon>
        <taxon>Euarchontoglires</taxon>
        <taxon>Primates</taxon>
        <taxon>Haplorrhini</taxon>
        <taxon>Catarrhini</taxon>
        <taxon>Hominidae</taxon>
        <taxon>Homo</taxon>
    </lineage>
</organism>
<name>TDG_HUMAN</name>
<feature type="chain" id="PRO_0000185777" description="G/T mismatch-specific thymine DNA glycosylase">
    <location>
        <begin position="1"/>
        <end position="410"/>
    </location>
</feature>
<feature type="region of interest" description="Disordered" evidence="1">
    <location>
        <begin position="37"/>
        <end position="97"/>
    </location>
</feature>
<feature type="compositionally biased region" description="Basic and acidic residues" evidence="1">
    <location>
        <begin position="66"/>
        <end position="97"/>
    </location>
</feature>
<feature type="cross-link" description="Glycyl lysine isopeptide (Lys-Gly) (interchain with G-Cter in SUMO2)" evidence="19">
    <location>
        <position position="103"/>
    </location>
</feature>
<feature type="cross-link" description="Glycyl lysine isopeptide (Lys-Gly) (interchain with G-Cter in SUMO2)" evidence="19">
    <location>
        <position position="248"/>
    </location>
</feature>
<feature type="cross-link" description="Glycyl lysine isopeptide (Lys-Gly) (interchain with G-Cter in SUMO); alternate">
    <location>
        <position position="330"/>
    </location>
</feature>
<feature type="cross-link" description="Glycyl lysine isopeptide (Lys-Gly) (interchain with G-Cter in SUMO2); alternate" evidence="16 17 18 19">
    <location>
        <position position="330"/>
    </location>
</feature>
<feature type="sequence variant" id="VAR_018892" description="In dbSNP:rs4135113." evidence="14">
    <original>G</original>
    <variation>S</variation>
    <location>
        <position position="199"/>
    </location>
</feature>
<feature type="sequence variant" id="VAR_059450" description="In dbSNP:rs2888805.">
    <original>V</original>
    <variation>L</variation>
    <location>
        <position position="367"/>
    </location>
</feature>
<feature type="sequence variant" id="VAR_018893" description="In dbSNP:rs2888805." evidence="14">
    <original>V</original>
    <variation>M</variation>
    <location>
        <position position="367"/>
    </location>
</feature>
<feature type="sequence variant" id="VAR_050140" description="In dbSNP:rs3953597.">
    <original>G</original>
    <variation>E</variation>
    <location>
        <position position="381"/>
    </location>
</feature>
<feature type="mutagenesis site" description="Loss of DNA glycosylase activity but still able to bind DNA." evidence="8">
    <original>N</original>
    <variation>A</variation>
    <location>
        <position position="140"/>
    </location>
</feature>
<feature type="mutagenesis site" description="Increased DNA glycosylase activity on G/T mispairs." evidence="9">
    <original>A</original>
    <variation>G</variation>
    <location>
        <position position="145"/>
    </location>
</feature>
<feature type="mutagenesis site" description="Increased DNA glycosylase activity on G/T mispairs." evidence="9">
    <original>H</original>
    <variation>A</variation>
    <variation>Q</variation>
    <location>
        <position position="151"/>
    </location>
</feature>
<feature type="mutagenesis site" description="Reduced DNA glycosylase activity on G/T and G/U mispairs." evidence="9">
    <original>N</original>
    <variation>A</variation>
    <location>
        <position position="191"/>
    </location>
</feature>
<feature type="mutagenesis site" description="Reduced DNA glycosylase activity on G/T mispairs." evidence="9">
    <original>T</original>
    <variation>A</variation>
    <location>
        <position position="197"/>
    </location>
</feature>
<feature type="mutagenesis site" description="Restores the DNA-binding ability of the sumoylated form." evidence="3">
    <original>R</original>
    <variation>A</variation>
    <location>
        <position position="281"/>
    </location>
</feature>
<feature type="mutagenesis site" description="Restores the DNA-binding ability of the sumoylated form." evidence="3 4">
    <original>E</original>
    <variation>Q</variation>
    <location>
        <position position="310"/>
    </location>
</feature>
<feature type="mutagenesis site" description="Restores the DNA-binding ability of the sumoylated form." evidence="3">
    <original>F</original>
    <variation>A</variation>
    <location>
        <position position="315"/>
    </location>
</feature>
<feature type="sequence conflict" description="In Ref. 1; AAC50540." evidence="15" ref="1">
    <original>S</original>
    <variation>P</variation>
    <location>
        <position position="91"/>
    </location>
</feature>
<feature type="sequence conflict" description="In Ref. 4; AAH37557." evidence="15" ref="4">
    <original>V</original>
    <variation>G</variation>
    <location>
        <position position="268"/>
    </location>
</feature>
<feature type="turn" evidence="24">
    <location>
        <begin position="111"/>
        <end position="113"/>
    </location>
</feature>
<feature type="helix" evidence="23">
    <location>
        <begin position="116"/>
        <end position="119"/>
    </location>
</feature>
<feature type="strand" evidence="23">
    <location>
        <begin position="133"/>
        <end position="139"/>
    </location>
</feature>
<feature type="helix" evidence="23">
    <location>
        <begin position="143"/>
        <end position="148"/>
    </location>
</feature>
<feature type="strand" evidence="23">
    <location>
        <begin position="150"/>
        <end position="152"/>
    </location>
</feature>
<feature type="strand" evidence="25">
    <location>
        <begin position="154"/>
        <end position="157"/>
    </location>
</feature>
<feature type="helix" evidence="23">
    <location>
        <begin position="159"/>
        <end position="165"/>
    </location>
</feature>
<feature type="strand" evidence="23">
    <location>
        <begin position="168"/>
        <end position="171"/>
    </location>
</feature>
<feature type="helix" evidence="23">
    <location>
        <begin position="175"/>
        <end position="180"/>
    </location>
</feature>
<feature type="helix" evidence="23">
    <location>
        <begin position="181"/>
        <end position="185"/>
    </location>
</feature>
<feature type="strand" evidence="23">
    <location>
        <begin position="186"/>
        <end position="192"/>
    </location>
</feature>
<feature type="helix" evidence="23">
    <location>
        <begin position="200"/>
        <end position="202"/>
    </location>
</feature>
<feature type="helix" evidence="23">
    <location>
        <begin position="205"/>
        <end position="222"/>
    </location>
</feature>
<feature type="strand" evidence="23">
    <location>
        <begin position="225"/>
        <end position="231"/>
    </location>
</feature>
<feature type="helix" evidence="23">
    <location>
        <begin position="232"/>
        <end position="243"/>
    </location>
</feature>
<feature type="strand" evidence="23">
    <location>
        <begin position="252"/>
        <end position="254"/>
    </location>
</feature>
<feature type="strand" evidence="23">
    <location>
        <begin position="265"/>
        <end position="269"/>
    </location>
</feature>
<feature type="strand" evidence="22">
    <location>
        <begin position="272"/>
        <end position="274"/>
    </location>
</feature>
<feature type="strand" evidence="21">
    <location>
        <begin position="277"/>
        <end position="279"/>
    </location>
</feature>
<feature type="helix" evidence="23">
    <location>
        <begin position="282"/>
        <end position="304"/>
    </location>
</feature>
<feature type="strand" evidence="20">
    <location>
        <begin position="308"/>
        <end position="314"/>
    </location>
</feature>
<feature type="helix" evidence="20">
    <location>
        <begin position="317"/>
        <end position="329"/>
    </location>
</feature>
<reference key="1">
    <citation type="journal article" date="1996" name="J. Biol. Chem.">
        <title>Cloning and expression of human G/T mismatch-specific thymine-DNA glycosylase.</title>
        <authorList>
            <person name="Neddermann P."/>
            <person name="Gallinari P."/>
            <person name="Lettieri T."/>
            <person name="Schmid D."/>
            <person name="Truong O."/>
            <person name="Hsuan J.J."/>
            <person name="Wiebauer K."/>
            <person name="Jiricny J."/>
        </authorList>
    </citation>
    <scope>NUCLEOTIDE SEQUENCE [MRNA]</scope>
    <scope>PARTIAL PROTEIN SEQUENCE</scope>
    <scope>FUNCTION</scope>
    <scope>SUBCELLULAR LOCATION</scope>
</reference>
<reference key="2">
    <citation type="submission" date="2002-09" db="EMBL/GenBank/DDBJ databases">
        <authorList>
            <consortium name="NIEHS SNPs program"/>
        </authorList>
    </citation>
    <scope>NUCLEOTIDE SEQUENCE [GENOMIC DNA]</scope>
    <scope>VARIANTS SER-199 AND MET-367</scope>
</reference>
<reference key="3">
    <citation type="journal article" date="2006" name="Nature">
        <title>The finished DNA sequence of human chromosome 12.</title>
        <authorList>
            <person name="Scherer S.E."/>
            <person name="Muzny D.M."/>
            <person name="Buhay C.J."/>
            <person name="Chen R."/>
            <person name="Cree A."/>
            <person name="Ding Y."/>
            <person name="Dugan-Rocha S."/>
            <person name="Gill R."/>
            <person name="Gunaratne P."/>
            <person name="Harris R.A."/>
            <person name="Hawes A.C."/>
            <person name="Hernandez J."/>
            <person name="Hodgson A.V."/>
            <person name="Hume J."/>
            <person name="Jackson A."/>
            <person name="Khan Z.M."/>
            <person name="Kovar-Smith C."/>
            <person name="Lewis L.R."/>
            <person name="Lozado R.J."/>
            <person name="Metzker M.L."/>
            <person name="Milosavljevic A."/>
            <person name="Miner G.R."/>
            <person name="Montgomery K.T."/>
            <person name="Morgan M.B."/>
            <person name="Nazareth L.V."/>
            <person name="Scott G."/>
            <person name="Sodergren E."/>
            <person name="Song X.-Z."/>
            <person name="Steffen D."/>
            <person name="Lovering R.C."/>
            <person name="Wheeler D.A."/>
            <person name="Worley K.C."/>
            <person name="Yuan Y."/>
            <person name="Zhang Z."/>
            <person name="Adams C.Q."/>
            <person name="Ansari-Lari M.A."/>
            <person name="Ayele M."/>
            <person name="Brown M.J."/>
            <person name="Chen G."/>
            <person name="Chen Z."/>
            <person name="Clerc-Blankenburg K.P."/>
            <person name="Davis C."/>
            <person name="Delgado O."/>
            <person name="Dinh H.H."/>
            <person name="Draper H."/>
            <person name="Gonzalez-Garay M.L."/>
            <person name="Havlak P."/>
            <person name="Jackson L.R."/>
            <person name="Jacob L.S."/>
            <person name="Kelly S.H."/>
            <person name="Li L."/>
            <person name="Li Z."/>
            <person name="Liu J."/>
            <person name="Liu W."/>
            <person name="Lu J."/>
            <person name="Maheshwari M."/>
            <person name="Nguyen B.-V."/>
            <person name="Okwuonu G.O."/>
            <person name="Pasternak S."/>
            <person name="Perez L.M."/>
            <person name="Plopper F.J.H."/>
            <person name="Santibanez J."/>
            <person name="Shen H."/>
            <person name="Tabor P.E."/>
            <person name="Verduzco D."/>
            <person name="Waldron L."/>
            <person name="Wang Q."/>
            <person name="Williams G.A."/>
            <person name="Zhang J."/>
            <person name="Zhou J."/>
            <person name="Allen C.C."/>
            <person name="Amin A.G."/>
            <person name="Anyalebechi V."/>
            <person name="Bailey M."/>
            <person name="Barbaria J.A."/>
            <person name="Bimage K.E."/>
            <person name="Bryant N.P."/>
            <person name="Burch P.E."/>
            <person name="Burkett C.E."/>
            <person name="Burrell K.L."/>
            <person name="Calderon E."/>
            <person name="Cardenas V."/>
            <person name="Carter K."/>
            <person name="Casias K."/>
            <person name="Cavazos I."/>
            <person name="Cavazos S.R."/>
            <person name="Ceasar H."/>
            <person name="Chacko J."/>
            <person name="Chan S.N."/>
            <person name="Chavez D."/>
            <person name="Christopoulos C."/>
            <person name="Chu J."/>
            <person name="Cockrell R."/>
            <person name="Cox C.D."/>
            <person name="Dang M."/>
            <person name="Dathorne S.R."/>
            <person name="David R."/>
            <person name="Davis C.M."/>
            <person name="Davy-Carroll L."/>
            <person name="Deshazo D.R."/>
            <person name="Donlin J.E."/>
            <person name="D'Souza L."/>
            <person name="Eaves K.A."/>
            <person name="Egan A."/>
            <person name="Emery-Cohen A.J."/>
            <person name="Escotto M."/>
            <person name="Flagg N."/>
            <person name="Forbes L.D."/>
            <person name="Gabisi A.M."/>
            <person name="Garza M."/>
            <person name="Hamilton C."/>
            <person name="Henderson N."/>
            <person name="Hernandez O."/>
            <person name="Hines S."/>
            <person name="Hogues M.E."/>
            <person name="Huang M."/>
            <person name="Idlebird D.G."/>
            <person name="Johnson R."/>
            <person name="Jolivet A."/>
            <person name="Jones S."/>
            <person name="Kagan R."/>
            <person name="King L.M."/>
            <person name="Leal B."/>
            <person name="Lebow H."/>
            <person name="Lee S."/>
            <person name="LeVan J.M."/>
            <person name="Lewis L.C."/>
            <person name="London P."/>
            <person name="Lorensuhewa L.M."/>
            <person name="Loulseged H."/>
            <person name="Lovett D.A."/>
            <person name="Lucier A."/>
            <person name="Lucier R.L."/>
            <person name="Ma J."/>
            <person name="Madu R.C."/>
            <person name="Mapua P."/>
            <person name="Martindale A.D."/>
            <person name="Martinez E."/>
            <person name="Massey E."/>
            <person name="Mawhiney S."/>
            <person name="Meador M.G."/>
            <person name="Mendez S."/>
            <person name="Mercado C."/>
            <person name="Mercado I.C."/>
            <person name="Merritt C.E."/>
            <person name="Miner Z.L."/>
            <person name="Minja E."/>
            <person name="Mitchell T."/>
            <person name="Mohabbat F."/>
            <person name="Mohabbat K."/>
            <person name="Montgomery B."/>
            <person name="Moore N."/>
            <person name="Morris S."/>
            <person name="Munidasa M."/>
            <person name="Ngo R.N."/>
            <person name="Nguyen N.B."/>
            <person name="Nickerson E."/>
            <person name="Nwaokelemeh O.O."/>
            <person name="Nwokenkwo S."/>
            <person name="Obregon M."/>
            <person name="Oguh M."/>
            <person name="Oragunye N."/>
            <person name="Oviedo R.J."/>
            <person name="Parish B.J."/>
            <person name="Parker D.N."/>
            <person name="Parrish J."/>
            <person name="Parks K.L."/>
            <person name="Paul H.A."/>
            <person name="Payton B.A."/>
            <person name="Perez A."/>
            <person name="Perrin W."/>
            <person name="Pickens A."/>
            <person name="Primus E.L."/>
            <person name="Pu L.-L."/>
            <person name="Puazo M."/>
            <person name="Quiles M.M."/>
            <person name="Quiroz J.B."/>
            <person name="Rabata D."/>
            <person name="Reeves K."/>
            <person name="Ruiz S.J."/>
            <person name="Shao H."/>
            <person name="Sisson I."/>
            <person name="Sonaike T."/>
            <person name="Sorelle R.P."/>
            <person name="Sutton A.E."/>
            <person name="Svatek A.F."/>
            <person name="Svetz L.A."/>
            <person name="Tamerisa K.S."/>
            <person name="Taylor T.R."/>
            <person name="Teague B."/>
            <person name="Thomas N."/>
            <person name="Thorn R.D."/>
            <person name="Trejos Z.Y."/>
            <person name="Trevino B.K."/>
            <person name="Ukegbu O.N."/>
            <person name="Urban J.B."/>
            <person name="Vasquez L.I."/>
            <person name="Vera V.A."/>
            <person name="Villasana D.M."/>
            <person name="Wang L."/>
            <person name="Ward-Moore S."/>
            <person name="Warren J.T."/>
            <person name="Wei X."/>
            <person name="White F."/>
            <person name="Williamson A.L."/>
            <person name="Wleczyk R."/>
            <person name="Wooden H.S."/>
            <person name="Wooden S.H."/>
            <person name="Yen J."/>
            <person name="Yoon L."/>
            <person name="Yoon V."/>
            <person name="Zorrilla S.E."/>
            <person name="Nelson D."/>
            <person name="Kucherlapati R."/>
            <person name="Weinstock G."/>
            <person name="Gibbs R.A."/>
        </authorList>
    </citation>
    <scope>NUCLEOTIDE SEQUENCE [LARGE SCALE GENOMIC DNA]</scope>
</reference>
<reference key="4">
    <citation type="journal article" date="2004" name="Genome Res.">
        <title>The status, quality, and expansion of the NIH full-length cDNA project: the Mammalian Gene Collection (MGC).</title>
        <authorList>
            <consortium name="The MGC Project Team"/>
        </authorList>
    </citation>
    <scope>NUCLEOTIDE SEQUENCE [LARGE SCALE MRNA]</scope>
    <source>
        <tissue>Colon</tissue>
    </source>
</reference>
<reference key="5">
    <citation type="journal article" date="1994" name="Proc. Natl. Acad. Sci. U.S.A.">
        <title>Efficient removal of uracil from G.U mispairs by the mismatch-specific thymine DNA glycosylase from HeLa cells.</title>
        <authorList>
            <person name="Neddermann P."/>
            <person name="Jiricny J."/>
        </authorList>
    </citation>
    <scope>FUNCTION</scope>
</reference>
<reference key="6">
    <citation type="journal article" date="1993" name="J. Biol. Chem.">
        <title>The purification of a mismatch-specific thymine-DNA glycosylase from HeLa cells.</title>
        <authorList>
            <person name="Neddermann P."/>
            <person name="Jiricny J."/>
        </authorList>
    </citation>
    <scope>FUNCTION</scope>
</reference>
<reference key="7">
    <citation type="journal article" date="2002" name="EMBO J.">
        <title>Modification of the human thymine-DNA glycosylase by ubiquitin-like proteins facilitates enzymatic turnover.</title>
        <authorList>
            <person name="Hardeland U."/>
            <person name="Steinacher R."/>
            <person name="Jiricny J."/>
            <person name="Schaer P."/>
        </authorList>
    </citation>
    <scope>SUMOYLATION AT LYS-330</scope>
</reference>
<reference key="8">
    <citation type="journal article" date="2011" name="Cell">
        <title>Thymine DNA glycosylase is essential for active DNA demethylation by linked deamination-base excision repair.</title>
        <authorList>
            <person name="Cortellino S."/>
            <person name="Xu J."/>
            <person name="Sannai M."/>
            <person name="Moore R."/>
            <person name="Caretti E."/>
            <person name="Cigliano A."/>
            <person name="Le Coz M."/>
            <person name="Devarajan K."/>
            <person name="Wessels A."/>
            <person name="Soprano D."/>
            <person name="Abramowitz L.K."/>
            <person name="Bartolomei M.S."/>
            <person name="Rambow F."/>
            <person name="Bassi M.R."/>
            <person name="Bruno T."/>
            <person name="Fanciulli M."/>
            <person name="Renner C."/>
            <person name="Klein-Szanto A.J."/>
            <person name="Matsumoto Y."/>
            <person name="Kobi D."/>
            <person name="Davidson I."/>
            <person name="Alberti C."/>
            <person name="Larue L."/>
            <person name="Bellacosa A."/>
        </authorList>
    </citation>
    <scope>INTERACTION WITH AICDA AND GADD45A</scope>
</reference>
<reference key="9">
    <citation type="journal article" date="2011" name="J. Biol. Chem.">
        <title>Thymine DNA glycosylase can rapidly excise 5-formylcytosine and 5-carboxylcytosine: potential implications for active demethylation of CpG sites.</title>
        <authorList>
            <person name="Maiti A."/>
            <person name="Drohat A.C."/>
        </authorList>
    </citation>
    <scope>FUNCTION</scope>
</reference>
<reference key="10">
    <citation type="journal article" date="2012" name="Proc. Natl. Acad. Sci. U.S.A.">
        <title>N-terminal acetylome analyses and functional insights of the N-terminal acetyltransferase NatB.</title>
        <authorList>
            <person name="Van Damme P."/>
            <person name="Lasa M."/>
            <person name="Polevoda B."/>
            <person name="Gazquez C."/>
            <person name="Elosegui-Artola A."/>
            <person name="Kim D.S."/>
            <person name="De Juan-Pardo E."/>
            <person name="Demeyer K."/>
            <person name="Hole K."/>
            <person name="Larrea E."/>
            <person name="Timmerman E."/>
            <person name="Prieto J."/>
            <person name="Arnesen T."/>
            <person name="Sherman F."/>
            <person name="Gevaert K."/>
            <person name="Aldabe R."/>
        </authorList>
    </citation>
    <scope>IDENTIFICATION BY MASS SPECTROMETRY [LARGE SCALE ANALYSIS]</scope>
</reference>
<reference key="11">
    <citation type="journal article" date="2014" name="Nat. Struct. Mol. Biol.">
        <title>Uncovering global SUMOylation signaling networks in a site-specific manner.</title>
        <authorList>
            <person name="Hendriks I.A."/>
            <person name="D'Souza R.C."/>
            <person name="Yang B."/>
            <person name="Verlaan-de Vries M."/>
            <person name="Mann M."/>
            <person name="Vertegaal A.C."/>
        </authorList>
    </citation>
    <scope>SUMOYLATION [LARGE SCALE ANALYSIS] AT LYS-330</scope>
    <scope>IDENTIFICATION BY MASS SPECTROMETRY [LARGE SCALE ANALYSIS]</scope>
</reference>
<reference key="12">
    <citation type="journal article" date="2015" name="Cell Rep.">
        <title>SUMO-2 orchestrates chromatin modifiers in response to DNA damage.</title>
        <authorList>
            <person name="Hendriks I.A."/>
            <person name="Treffers L.W."/>
            <person name="Verlaan-de Vries M."/>
            <person name="Olsen J.V."/>
            <person name="Vertegaal A.C."/>
        </authorList>
    </citation>
    <scope>SUMOYLATION [LARGE SCALE ANALYSIS] AT LYS-330</scope>
    <scope>IDENTIFICATION BY MASS SPECTROMETRY [LARGE SCALE ANALYSIS]</scope>
</reference>
<reference key="13">
    <citation type="journal article" date="2015" name="Mol. Cell. Proteomics">
        <title>System-wide analysis of SUMOylation dynamics in response to replication stress reveals novel small ubiquitin-like modified target proteins and acceptor lysines relevant for genome stability.</title>
        <authorList>
            <person name="Xiao Z."/>
            <person name="Chang J.G."/>
            <person name="Hendriks I.A."/>
            <person name="Sigurdsson J.O."/>
            <person name="Olsen J.V."/>
            <person name="Vertegaal A.C."/>
        </authorList>
    </citation>
    <scope>SUMOYLATION [LARGE SCALE ANALYSIS] AT LYS-330</scope>
    <scope>IDENTIFICATION BY MASS SPECTROMETRY [LARGE SCALE ANALYSIS]</scope>
</reference>
<reference key="14">
    <citation type="journal article" date="2017" name="Nat. Struct. Mol. Biol.">
        <title>Site-specific mapping of the human SUMO proteome reveals co-modification with phosphorylation.</title>
        <authorList>
            <person name="Hendriks I.A."/>
            <person name="Lyon D."/>
            <person name="Young C."/>
            <person name="Jensen L.J."/>
            <person name="Vertegaal A.C."/>
            <person name="Nielsen M.L."/>
        </authorList>
    </citation>
    <scope>SUMOYLATION [LARGE SCALE ANALYSIS] AT LYS-103; LYS-248 AND LYS-330</scope>
    <scope>IDENTIFICATION BY MASS SPECTROMETRY [LARGE SCALE ANALYSIS]</scope>
</reference>
<reference key="15">
    <citation type="journal article" date="2005" name="Nature">
        <title>Crystal structure of thymine DNA glycosylase conjugated to SUMO-1.</title>
        <authorList>
            <person name="Baba D."/>
            <person name="Maita N."/>
            <person name="Jee J.-G."/>
            <person name="Uchimura Y."/>
            <person name="Saitoh H."/>
            <person name="Sugasawa K."/>
            <person name="Hanaoka F."/>
            <person name="Tochio H."/>
            <person name="Hiroaki H."/>
            <person name="Shirakawa M."/>
        </authorList>
    </citation>
    <scope>X-RAY CRYSTALLOGRAPHY (2.1 ANGSTROMS) OF 112-339 CONJUGATED TO SUMO1</scope>
    <scope>MUTAGENESIS OF ARG-281; GLU-310 AND PHE-315</scope>
</reference>
<reference key="16">
    <citation type="journal article" date="2006" name="J. Mol. Biol.">
        <title>Crystal structure of SUMO-3-modified thymine-DNA glycosylase.</title>
        <authorList>
            <person name="Baba D."/>
            <person name="Maita N."/>
            <person name="Jee J.-G."/>
            <person name="Uchimura Y."/>
            <person name="Saitoh H."/>
            <person name="Sugasawa K."/>
            <person name="Hanaoka F."/>
            <person name="Tochio H."/>
            <person name="Hiroaki H."/>
            <person name="Shirakawa M."/>
        </authorList>
    </citation>
    <scope>X-RAY CRYSTALLOGRAPHY (2.1 ANGSTROMS) OF 112-339 CONJUGATED TO SUMO2</scope>
    <scope>MUTAGENESIS OF GLU-310</scope>
</reference>
<reference key="17">
    <citation type="journal article" date="2008" name="Proc. Natl. Acad. Sci. U.S.A.">
        <title>Crystal structure of human thymine DNA glycosylase bound to DNA elucidates sequence-specific mismatch recognition.</title>
        <authorList>
            <person name="Maiti A."/>
            <person name="Morgan M.T."/>
            <person name="Pozharski E."/>
            <person name="Drohat A.C."/>
        </authorList>
    </citation>
    <scope>X-RAY CRYSTALLOGRAPHY (2.79 ANGSTROMS) OF 111-308 IN COMPLEX WITH DNA</scope>
    <scope>SUBUNIT</scope>
</reference>
<reference key="18">
    <citation type="journal article" date="2012" name="Nat. Chem. Biol.">
        <title>Thymine DNA glycosylase specifically recognizes 5-carboxylcytosine-modified DNA.</title>
        <authorList>
            <person name="Zhang L."/>
            <person name="Lu X."/>
            <person name="Lu J."/>
            <person name="Liang H."/>
            <person name="Dai Q."/>
            <person name="Xu G.L."/>
            <person name="Luo C."/>
            <person name="Jiang H."/>
            <person name="He C."/>
        </authorList>
    </citation>
    <scope>X-RAY CRYSTALLOGRAPHY (3.01 ANGSTROMS) OF 111-308 IN COMPLEX WITH DNA</scope>
    <scope>FUNCTION</scope>
    <scope>SUBUNIT</scope>
    <scope>MUTAGENESIS OF ASN-140</scope>
</reference>
<reference key="19">
    <citation type="journal article" date="2012" name="Nucleic Acids Res.">
        <title>Excision of 5-hydroxymethyluracil and 5-carboxylcytosine by the thymine DNA glycosylase domain: its structural basis and implications for active DNA demethylation.</title>
        <authorList>
            <person name="Hashimoto H."/>
            <person name="Hong S."/>
            <person name="Bhagwat A.S."/>
            <person name="Zhang X."/>
            <person name="Cheng X."/>
        </authorList>
    </citation>
    <scope>X-RAY CRYSTALLOGRAPHY (2.49 ANGSTROMS) OF 111-308 IN COMPLEX WITH DNA</scope>
    <scope>FUNCTION</scope>
</reference>
<reference key="20">
    <citation type="journal article" date="2012" name="Proc. Natl. Acad. Sci. U.S.A.">
        <title>Lesion processing by a repair enzyme is severely curtailed by residues needed to prevent aberrant activity on undamaged DNA.</title>
        <authorList>
            <person name="Maiti A."/>
            <person name="Noon M.S."/>
            <person name="MacKerell A.D. Jr."/>
            <person name="Pozharski E."/>
            <person name="Drohat A.C."/>
        </authorList>
    </citation>
    <scope>X-RAY CRYSTALLOGRAPHY (2.97 ANGSTROMS) OF 111-308 IN COMPLEX WITH DNA</scope>
    <scope>FUNCTION</scope>
    <scope>MUTAGENESIS OF ALA-145; HIS-151; ASN-191 AND THR-197</scope>
</reference>
<protein>
    <recommendedName>
        <fullName>G/T mismatch-specific thymine DNA glycosylase</fullName>
        <ecNumber>3.2.2.29</ecNumber>
    </recommendedName>
    <alternativeName>
        <fullName>Thymine-DNA glycosylase</fullName>
        <shortName>hTDG</shortName>
    </alternativeName>
</protein>